<dbReference type="EC" id="5.4.2.7" evidence="1"/>
<dbReference type="EMBL" id="CP000446">
    <property type="protein sequence ID" value="ABI38119.1"/>
    <property type="molecule type" value="Genomic_DNA"/>
</dbReference>
<dbReference type="RefSeq" id="WP_011621830.1">
    <property type="nucleotide sequence ID" value="NC_008321.1"/>
</dbReference>
<dbReference type="SMR" id="Q0HLE8"/>
<dbReference type="KEGG" id="she:Shewmr4_1039"/>
<dbReference type="HOGENOM" id="CLU_053861_0_0_6"/>
<dbReference type="UniPathway" id="UPA00002">
    <property type="reaction ID" value="UER00467"/>
</dbReference>
<dbReference type="GO" id="GO:0005829">
    <property type="term" value="C:cytosol"/>
    <property type="evidence" value="ECO:0007669"/>
    <property type="project" value="TreeGrafter"/>
</dbReference>
<dbReference type="GO" id="GO:0000287">
    <property type="term" value="F:magnesium ion binding"/>
    <property type="evidence" value="ECO:0007669"/>
    <property type="project" value="InterPro"/>
</dbReference>
<dbReference type="GO" id="GO:0030145">
    <property type="term" value="F:manganese ion binding"/>
    <property type="evidence" value="ECO:0007669"/>
    <property type="project" value="UniProtKB-UniRule"/>
</dbReference>
<dbReference type="GO" id="GO:0008973">
    <property type="term" value="F:phosphopentomutase activity"/>
    <property type="evidence" value="ECO:0007669"/>
    <property type="project" value="UniProtKB-UniRule"/>
</dbReference>
<dbReference type="GO" id="GO:0006018">
    <property type="term" value="P:2-deoxyribose 1-phosphate catabolic process"/>
    <property type="evidence" value="ECO:0007669"/>
    <property type="project" value="UniProtKB-UniRule"/>
</dbReference>
<dbReference type="GO" id="GO:0006015">
    <property type="term" value="P:5-phosphoribose 1-diphosphate biosynthetic process"/>
    <property type="evidence" value="ECO:0007669"/>
    <property type="project" value="UniProtKB-UniPathway"/>
</dbReference>
<dbReference type="GO" id="GO:0043094">
    <property type="term" value="P:metabolic compound salvage"/>
    <property type="evidence" value="ECO:0007669"/>
    <property type="project" value="InterPro"/>
</dbReference>
<dbReference type="GO" id="GO:0009117">
    <property type="term" value="P:nucleotide metabolic process"/>
    <property type="evidence" value="ECO:0007669"/>
    <property type="project" value="InterPro"/>
</dbReference>
<dbReference type="CDD" id="cd16009">
    <property type="entry name" value="PPM"/>
    <property type="match status" value="1"/>
</dbReference>
<dbReference type="FunFam" id="3.30.70.1250:FF:000001">
    <property type="entry name" value="Phosphopentomutase"/>
    <property type="match status" value="1"/>
</dbReference>
<dbReference type="Gene3D" id="3.40.720.10">
    <property type="entry name" value="Alkaline Phosphatase, subunit A"/>
    <property type="match status" value="1"/>
</dbReference>
<dbReference type="Gene3D" id="3.30.70.1250">
    <property type="entry name" value="Phosphopentomutase"/>
    <property type="match status" value="1"/>
</dbReference>
<dbReference type="HAMAP" id="MF_00740">
    <property type="entry name" value="Phosphopentomut"/>
    <property type="match status" value="1"/>
</dbReference>
<dbReference type="InterPro" id="IPR017850">
    <property type="entry name" value="Alkaline_phosphatase_core_sf"/>
</dbReference>
<dbReference type="InterPro" id="IPR010045">
    <property type="entry name" value="DeoB"/>
</dbReference>
<dbReference type="InterPro" id="IPR006124">
    <property type="entry name" value="Metalloenzyme"/>
</dbReference>
<dbReference type="InterPro" id="IPR024052">
    <property type="entry name" value="Phosphopentomutase_DeoB_cap_sf"/>
</dbReference>
<dbReference type="NCBIfam" id="TIGR01696">
    <property type="entry name" value="deoB"/>
    <property type="match status" value="1"/>
</dbReference>
<dbReference type="NCBIfam" id="NF003766">
    <property type="entry name" value="PRK05362.1"/>
    <property type="match status" value="1"/>
</dbReference>
<dbReference type="PANTHER" id="PTHR21110">
    <property type="entry name" value="PHOSPHOPENTOMUTASE"/>
    <property type="match status" value="1"/>
</dbReference>
<dbReference type="PANTHER" id="PTHR21110:SF0">
    <property type="entry name" value="PHOSPHOPENTOMUTASE"/>
    <property type="match status" value="1"/>
</dbReference>
<dbReference type="Pfam" id="PF01676">
    <property type="entry name" value="Metalloenzyme"/>
    <property type="match status" value="1"/>
</dbReference>
<dbReference type="PIRSF" id="PIRSF001491">
    <property type="entry name" value="Ppentomutase"/>
    <property type="match status" value="1"/>
</dbReference>
<dbReference type="SUPFAM" id="SSF53649">
    <property type="entry name" value="Alkaline phosphatase-like"/>
    <property type="match status" value="1"/>
</dbReference>
<dbReference type="SUPFAM" id="SSF143856">
    <property type="entry name" value="DeoB insert domain-like"/>
    <property type="match status" value="1"/>
</dbReference>
<reference key="1">
    <citation type="submission" date="2006-08" db="EMBL/GenBank/DDBJ databases">
        <title>Complete sequence of Shewanella sp. MR-4.</title>
        <authorList>
            <consortium name="US DOE Joint Genome Institute"/>
            <person name="Copeland A."/>
            <person name="Lucas S."/>
            <person name="Lapidus A."/>
            <person name="Barry K."/>
            <person name="Detter J.C."/>
            <person name="Glavina del Rio T."/>
            <person name="Hammon N."/>
            <person name="Israni S."/>
            <person name="Dalin E."/>
            <person name="Tice H."/>
            <person name="Pitluck S."/>
            <person name="Kiss H."/>
            <person name="Brettin T."/>
            <person name="Bruce D."/>
            <person name="Han C."/>
            <person name="Tapia R."/>
            <person name="Gilna P."/>
            <person name="Schmutz J."/>
            <person name="Larimer F."/>
            <person name="Land M."/>
            <person name="Hauser L."/>
            <person name="Kyrpides N."/>
            <person name="Mikhailova N."/>
            <person name="Nealson K."/>
            <person name="Konstantinidis K."/>
            <person name="Klappenbach J."/>
            <person name="Tiedje J."/>
            <person name="Richardson P."/>
        </authorList>
    </citation>
    <scope>NUCLEOTIDE SEQUENCE [LARGE SCALE GENOMIC DNA]</scope>
    <source>
        <strain>MR-4</strain>
    </source>
</reference>
<accession>Q0HLE8</accession>
<protein>
    <recommendedName>
        <fullName evidence="1">Phosphopentomutase</fullName>
        <ecNumber evidence="1">5.4.2.7</ecNumber>
    </recommendedName>
    <alternativeName>
        <fullName evidence="1">Phosphodeoxyribomutase</fullName>
    </alternativeName>
</protein>
<keyword id="KW-0963">Cytoplasm</keyword>
<keyword id="KW-0413">Isomerase</keyword>
<keyword id="KW-0464">Manganese</keyword>
<keyword id="KW-0479">Metal-binding</keyword>
<evidence type="ECO:0000255" key="1">
    <source>
        <dbReference type="HAMAP-Rule" id="MF_00740"/>
    </source>
</evidence>
<gene>
    <name evidence="1" type="primary">deoB</name>
    <name type="ordered locus">Shewmr4_1039</name>
</gene>
<comment type="function">
    <text evidence="1">Isomerase that catalyzes the conversion of deoxy-ribose 1-phosphate (dRib-1-P) and ribose 1-phosphate (Rib-1-P) to deoxy-ribose 5-phosphate (dRib-5-P) and ribose 5-phosphate (Rib-5-P), respectively.</text>
</comment>
<comment type="catalytic activity">
    <reaction evidence="1">
        <text>2-deoxy-alpha-D-ribose 1-phosphate = 2-deoxy-D-ribose 5-phosphate</text>
        <dbReference type="Rhea" id="RHEA:27658"/>
        <dbReference type="ChEBI" id="CHEBI:57259"/>
        <dbReference type="ChEBI" id="CHEBI:62877"/>
        <dbReference type="EC" id="5.4.2.7"/>
    </reaction>
</comment>
<comment type="catalytic activity">
    <reaction evidence="1">
        <text>alpha-D-ribose 1-phosphate = D-ribose 5-phosphate</text>
        <dbReference type="Rhea" id="RHEA:18793"/>
        <dbReference type="ChEBI" id="CHEBI:57720"/>
        <dbReference type="ChEBI" id="CHEBI:78346"/>
        <dbReference type="EC" id="5.4.2.7"/>
    </reaction>
</comment>
<comment type="cofactor">
    <cofactor evidence="1">
        <name>Mn(2+)</name>
        <dbReference type="ChEBI" id="CHEBI:29035"/>
    </cofactor>
    <text evidence="1">Binds 2 manganese ions.</text>
</comment>
<comment type="pathway">
    <text evidence="1">Carbohydrate degradation; 2-deoxy-D-ribose 1-phosphate degradation; D-glyceraldehyde 3-phosphate and acetaldehyde from 2-deoxy-alpha-D-ribose 1-phosphate: step 1/2.</text>
</comment>
<comment type="subcellular location">
    <subcellularLocation>
        <location evidence="1">Cytoplasm</location>
    </subcellularLocation>
</comment>
<comment type="similarity">
    <text evidence="1">Belongs to the phosphopentomutase family.</text>
</comment>
<organism>
    <name type="scientific">Shewanella sp. (strain MR-4)</name>
    <dbReference type="NCBI Taxonomy" id="60480"/>
    <lineage>
        <taxon>Bacteria</taxon>
        <taxon>Pseudomonadati</taxon>
        <taxon>Pseudomonadota</taxon>
        <taxon>Gammaproteobacteria</taxon>
        <taxon>Alteromonadales</taxon>
        <taxon>Shewanellaceae</taxon>
        <taxon>Shewanella</taxon>
    </lineage>
</organism>
<proteinExistence type="inferred from homology"/>
<sequence>MKRTVIMMLDSFGVGAAGDAAKFGDLGSDTFGHIAKACAEGKADIGREGPLTLPNLARLGLAHAAMESTGAFAPGFADDVELIGAYGHAQELSSGKDTPSGHWEMAGVPVLFDWGYFSEHQNSFPKELTDKILARAGLDGFLGNCHASGTTILEELGEEHMRSGKPIFYTSADSVFQIACHEGTFGLENLYRLCEIAREELEPYNIGRVIARPFDGTGPSDFARTGNRKDYSLEPPAKTVLDKLKAAGGEVVSVGKIADIYAYCGITKKVKANGLEALFDATLDEVKSAGENTIVFTNFVDFDSHYGHRRDVAGYAKGLEYFDSRLPEMLALLDEDDLLILTADHGCDPTWQGTDHTREYVPVLAYGAGLKAGSLGRRNSFADIGQSIASYFKLEPMEYGESFI</sequence>
<feature type="chain" id="PRO_1000046401" description="Phosphopentomutase">
    <location>
        <begin position="1"/>
        <end position="404"/>
    </location>
</feature>
<feature type="binding site" evidence="1">
    <location>
        <position position="10"/>
    </location>
    <ligand>
        <name>Mn(2+)</name>
        <dbReference type="ChEBI" id="CHEBI:29035"/>
        <label>1</label>
    </ligand>
</feature>
<feature type="binding site" evidence="1">
    <location>
        <position position="303"/>
    </location>
    <ligand>
        <name>Mn(2+)</name>
        <dbReference type="ChEBI" id="CHEBI:29035"/>
        <label>2</label>
    </ligand>
</feature>
<feature type="binding site" evidence="1">
    <location>
        <position position="308"/>
    </location>
    <ligand>
        <name>Mn(2+)</name>
        <dbReference type="ChEBI" id="CHEBI:29035"/>
        <label>2</label>
    </ligand>
</feature>
<feature type="binding site" evidence="1">
    <location>
        <position position="344"/>
    </location>
    <ligand>
        <name>Mn(2+)</name>
        <dbReference type="ChEBI" id="CHEBI:29035"/>
        <label>1</label>
    </ligand>
</feature>
<feature type="binding site" evidence="1">
    <location>
        <position position="345"/>
    </location>
    <ligand>
        <name>Mn(2+)</name>
        <dbReference type="ChEBI" id="CHEBI:29035"/>
        <label>1</label>
    </ligand>
</feature>
<feature type="binding site" evidence="1">
    <location>
        <position position="356"/>
    </location>
    <ligand>
        <name>Mn(2+)</name>
        <dbReference type="ChEBI" id="CHEBI:29035"/>
        <label>2</label>
    </ligand>
</feature>
<name>DEOB_SHESM</name>